<reference key="1">
    <citation type="journal article" date="1998" name="Nature">
        <title>Deciphering the biology of Mycobacterium tuberculosis from the complete genome sequence.</title>
        <authorList>
            <person name="Cole S.T."/>
            <person name="Brosch R."/>
            <person name="Parkhill J."/>
            <person name="Garnier T."/>
            <person name="Churcher C.M."/>
            <person name="Harris D.E."/>
            <person name="Gordon S.V."/>
            <person name="Eiglmeier K."/>
            <person name="Gas S."/>
            <person name="Barry C.E. III"/>
            <person name="Tekaia F."/>
            <person name="Badcock K."/>
            <person name="Basham D."/>
            <person name="Brown D."/>
            <person name="Chillingworth T."/>
            <person name="Connor R."/>
            <person name="Davies R.M."/>
            <person name="Devlin K."/>
            <person name="Feltwell T."/>
            <person name="Gentles S."/>
            <person name="Hamlin N."/>
            <person name="Holroyd S."/>
            <person name="Hornsby T."/>
            <person name="Jagels K."/>
            <person name="Krogh A."/>
            <person name="McLean J."/>
            <person name="Moule S."/>
            <person name="Murphy L.D."/>
            <person name="Oliver S."/>
            <person name="Osborne J."/>
            <person name="Quail M.A."/>
            <person name="Rajandream M.A."/>
            <person name="Rogers J."/>
            <person name="Rutter S."/>
            <person name="Seeger K."/>
            <person name="Skelton S."/>
            <person name="Squares S."/>
            <person name="Squares R."/>
            <person name="Sulston J.E."/>
            <person name="Taylor K."/>
            <person name="Whitehead S."/>
            <person name="Barrell B.G."/>
        </authorList>
    </citation>
    <scope>NUCLEOTIDE SEQUENCE [LARGE SCALE GENOMIC DNA]</scope>
    <source>
        <strain>ATCC 25618 / H37Rv</strain>
    </source>
</reference>
<reference key="2">
    <citation type="journal article" date="2011" name="Mol. Cell. Proteomics">
        <title>Proteogenomic analysis of Mycobacterium tuberculosis by high resolution mass spectrometry.</title>
        <authorList>
            <person name="Kelkar D.S."/>
            <person name="Kumar D."/>
            <person name="Kumar P."/>
            <person name="Balakrishnan L."/>
            <person name="Muthusamy B."/>
            <person name="Yadav A.K."/>
            <person name="Shrivastava P."/>
            <person name="Marimuthu A."/>
            <person name="Anand S."/>
            <person name="Sundaram H."/>
            <person name="Kingsbury R."/>
            <person name="Harsha H.C."/>
            <person name="Nair B."/>
            <person name="Prasad T.S."/>
            <person name="Chauhan D.S."/>
            <person name="Katoch K."/>
            <person name="Katoch V.M."/>
            <person name="Kumar P."/>
            <person name="Chaerkady R."/>
            <person name="Ramachandran S."/>
            <person name="Dash D."/>
            <person name="Pandey A."/>
        </authorList>
    </citation>
    <scope>IDENTIFICATION BY MASS SPECTROMETRY [LARGE SCALE ANALYSIS]</scope>
    <source>
        <strain>ATCC 25618 / H37Rv</strain>
    </source>
</reference>
<gene>
    <name type="ordered locus">Rv0377</name>
    <name type="ORF">MTV036.12</name>
</gene>
<dbReference type="EMBL" id="AL123456">
    <property type="protein sequence ID" value="CCP43107.1"/>
    <property type="molecule type" value="Genomic_DNA"/>
</dbReference>
<dbReference type="PIR" id="D70833">
    <property type="entry name" value="D70833"/>
</dbReference>
<dbReference type="RefSeq" id="NP_214891.1">
    <property type="nucleotide sequence ID" value="NC_000962.3"/>
</dbReference>
<dbReference type="RefSeq" id="WP_003898421.1">
    <property type="nucleotide sequence ID" value="NZ_NVQJ01000002.1"/>
</dbReference>
<dbReference type="SMR" id="P9WMF7"/>
<dbReference type="STRING" id="83332.Rv0377"/>
<dbReference type="PaxDb" id="83332-Rv0377"/>
<dbReference type="DNASU" id="886452"/>
<dbReference type="GeneID" id="886452"/>
<dbReference type="KEGG" id="mtu:Rv0377"/>
<dbReference type="KEGG" id="mtv:RVBD_0377"/>
<dbReference type="TubercuList" id="Rv0377"/>
<dbReference type="eggNOG" id="COG0583">
    <property type="taxonomic scope" value="Bacteria"/>
</dbReference>
<dbReference type="InParanoid" id="P9WMF7"/>
<dbReference type="OrthoDB" id="4512679at2"/>
<dbReference type="PhylomeDB" id="P9WMF7"/>
<dbReference type="Proteomes" id="UP000001584">
    <property type="component" value="Chromosome"/>
</dbReference>
<dbReference type="GO" id="GO:0003700">
    <property type="term" value="F:DNA-binding transcription factor activity"/>
    <property type="evidence" value="ECO:0007669"/>
    <property type="project" value="InterPro"/>
</dbReference>
<dbReference type="GO" id="GO:0000976">
    <property type="term" value="F:transcription cis-regulatory region binding"/>
    <property type="evidence" value="ECO:0000318"/>
    <property type="project" value="GO_Central"/>
</dbReference>
<dbReference type="GO" id="GO:0006355">
    <property type="term" value="P:regulation of DNA-templated transcription"/>
    <property type="evidence" value="ECO:0000318"/>
    <property type="project" value="GO_Central"/>
</dbReference>
<dbReference type="Gene3D" id="3.40.190.290">
    <property type="match status" value="1"/>
</dbReference>
<dbReference type="Gene3D" id="1.10.10.10">
    <property type="entry name" value="Winged helix-like DNA-binding domain superfamily/Winged helix DNA-binding domain"/>
    <property type="match status" value="1"/>
</dbReference>
<dbReference type="InterPro" id="IPR005119">
    <property type="entry name" value="LysR_subst-bd"/>
</dbReference>
<dbReference type="InterPro" id="IPR000847">
    <property type="entry name" value="Tscrpt_reg_HTH_LysR"/>
</dbReference>
<dbReference type="InterPro" id="IPR036388">
    <property type="entry name" value="WH-like_DNA-bd_sf"/>
</dbReference>
<dbReference type="InterPro" id="IPR036390">
    <property type="entry name" value="WH_DNA-bd_sf"/>
</dbReference>
<dbReference type="PANTHER" id="PTHR30126">
    <property type="entry name" value="HTH-TYPE TRANSCRIPTIONAL REGULATOR"/>
    <property type="match status" value="1"/>
</dbReference>
<dbReference type="PANTHER" id="PTHR30126:SF39">
    <property type="entry name" value="HTH-TYPE TRANSCRIPTIONAL REGULATOR CYSL"/>
    <property type="match status" value="1"/>
</dbReference>
<dbReference type="Pfam" id="PF00126">
    <property type="entry name" value="HTH_1"/>
    <property type="match status" value="1"/>
</dbReference>
<dbReference type="Pfam" id="PF03466">
    <property type="entry name" value="LysR_substrate"/>
    <property type="match status" value="1"/>
</dbReference>
<dbReference type="SUPFAM" id="SSF53850">
    <property type="entry name" value="Periplasmic binding protein-like II"/>
    <property type="match status" value="1"/>
</dbReference>
<dbReference type="SUPFAM" id="SSF46785">
    <property type="entry name" value="Winged helix' DNA-binding domain"/>
    <property type="match status" value="1"/>
</dbReference>
<dbReference type="PROSITE" id="PS50931">
    <property type="entry name" value="HTH_LYSR"/>
    <property type="match status" value="1"/>
</dbReference>
<comment type="similarity">
    <text evidence="2">Belongs to the LysR transcriptional regulatory family.</text>
</comment>
<protein>
    <recommendedName>
        <fullName>Uncharacterized HTH-type transcriptional regulator Rv0377</fullName>
    </recommendedName>
</protein>
<proteinExistence type="evidence at protein level"/>
<keyword id="KW-0238">DNA-binding</keyword>
<keyword id="KW-1185">Reference proteome</keyword>
<keyword id="KW-0804">Transcription</keyword>
<keyword id="KW-0805">Transcription regulation</keyword>
<evidence type="ECO:0000255" key="1">
    <source>
        <dbReference type="PROSITE-ProRule" id="PRU00253"/>
    </source>
</evidence>
<evidence type="ECO:0000305" key="2"/>
<name>Y377_MYCTU</name>
<organism>
    <name type="scientific">Mycobacterium tuberculosis (strain ATCC 25618 / H37Rv)</name>
    <dbReference type="NCBI Taxonomy" id="83332"/>
    <lineage>
        <taxon>Bacteria</taxon>
        <taxon>Bacillati</taxon>
        <taxon>Actinomycetota</taxon>
        <taxon>Actinomycetes</taxon>
        <taxon>Mycobacteriales</taxon>
        <taxon>Mycobacteriaceae</taxon>
        <taxon>Mycobacterium</taxon>
        <taxon>Mycobacterium tuberculosis complex</taxon>
    </lineage>
</organism>
<accession>P9WMF7</accession>
<accession>L0T6H5</accession>
<accession>O53712</accession>
<feature type="chain" id="PRO_0000105811" description="Uncharacterized HTH-type transcriptional regulator Rv0377">
    <location>
        <begin position="1"/>
        <end position="321"/>
    </location>
</feature>
<feature type="domain" description="HTH lysR-type" evidence="1">
    <location>
        <begin position="1"/>
        <end position="58"/>
    </location>
</feature>
<feature type="DNA-binding region" description="H-T-H motif" evidence="1">
    <location>
        <begin position="18"/>
        <end position="37"/>
    </location>
</feature>
<sequence>MTPAQLRAYSAVVRLGSVRAAAAELGLSDAGVSMHVAALRKELDDPLFTRTGAGLAFTPGGLRLASRAVEILGLQQQTAIEVTEAAHGRRLLRIAASSAFAEHAAPGLIELFSSRADDLSVELSVHPTSRFRELICSRAVDIAIGPASESSIGSDGSIFLRPFLKYQIITVVAPNSPLAAGIPMPALLRHQQWMLGPSAGSVDGEIATMLRGLAIPESQQRIFQSDAAALEEVMRVGGATLAIGFAVAKDLAAGRLVHVTGPGLDRAGEWCVATLAPSARQPAVSELVGFISTPRCIQAMIPGSGVGVTRFRPKVHVTLWS</sequence>